<protein>
    <recommendedName>
        <fullName>Auxin-responsive protein IAA7</fullName>
    </recommendedName>
    <alternativeName>
        <fullName>Indoleacetic acid-induced protein 7</fullName>
    </alternativeName>
</protein>
<accession>Q6H543</accession>
<accession>Q0E2L7</accession>
<keyword id="KW-0927">Auxin signaling pathway</keyword>
<keyword id="KW-0539">Nucleus</keyword>
<keyword id="KW-1185">Reference proteome</keyword>
<keyword id="KW-0678">Repressor</keyword>
<keyword id="KW-0804">Transcription</keyword>
<keyword id="KW-0805">Transcription regulation</keyword>
<organism>
    <name type="scientific">Oryza sativa subsp. japonica</name>
    <name type="common">Rice</name>
    <dbReference type="NCBI Taxonomy" id="39947"/>
    <lineage>
        <taxon>Eukaryota</taxon>
        <taxon>Viridiplantae</taxon>
        <taxon>Streptophyta</taxon>
        <taxon>Embryophyta</taxon>
        <taxon>Tracheophyta</taxon>
        <taxon>Spermatophyta</taxon>
        <taxon>Magnoliopsida</taxon>
        <taxon>Liliopsida</taxon>
        <taxon>Poales</taxon>
        <taxon>Poaceae</taxon>
        <taxon>BOP clade</taxon>
        <taxon>Oryzoideae</taxon>
        <taxon>Oryzeae</taxon>
        <taxon>Oryzinae</taxon>
        <taxon>Oryza</taxon>
        <taxon>Oryza sativa</taxon>
    </lineage>
</organism>
<evidence type="ECO:0000250" key="1"/>
<evidence type="ECO:0000255" key="2">
    <source>
        <dbReference type="PROSITE-ProRule" id="PRU01081"/>
    </source>
</evidence>
<evidence type="ECO:0000256" key="3">
    <source>
        <dbReference type="SAM" id="MobiDB-lite"/>
    </source>
</evidence>
<evidence type="ECO:0000269" key="4">
    <source>
    </source>
</evidence>
<evidence type="ECO:0000305" key="5"/>
<evidence type="ECO:0000312" key="6">
    <source>
        <dbReference type="EMBL" id="EEE56602.1"/>
    </source>
</evidence>
<proteinExistence type="evidence at transcript level"/>
<feature type="chain" id="PRO_0000223206" description="Auxin-responsive protein IAA7">
    <location>
        <begin position="1"/>
        <end position="300"/>
    </location>
</feature>
<feature type="domain" description="PB1" evidence="2">
    <location>
        <begin position="177"/>
        <end position="281"/>
    </location>
</feature>
<feature type="region of interest" description="Disordered" evidence="3">
    <location>
        <begin position="1"/>
        <end position="80"/>
    </location>
</feature>
<feature type="region of interest" description="Disordered" evidence="3">
    <location>
        <begin position="92"/>
        <end position="125"/>
    </location>
</feature>
<feature type="short sequence motif" description="EAR-like (transcriptional repression)" evidence="1">
    <location>
        <begin position="43"/>
        <end position="47"/>
    </location>
</feature>
<feature type="compositionally biased region" description="Polar residues" evidence="3">
    <location>
        <begin position="92"/>
        <end position="103"/>
    </location>
</feature>
<comment type="function">
    <text evidence="1">Aux/IAA proteins are short-lived transcriptional factors that function as repressors of early auxin response genes at low auxin concentrations.</text>
</comment>
<comment type="subunit">
    <text evidence="1">Homodimers and heterodimers.</text>
</comment>
<comment type="subcellular location">
    <subcellularLocation>
        <location evidence="1">Nucleus</location>
    </subcellularLocation>
</comment>
<comment type="tissue specificity">
    <text evidence="4">Expressed at low levels in roots and shoots.</text>
</comment>
<comment type="induction">
    <text evidence="4">Not induced by auxin.</text>
</comment>
<comment type="similarity">
    <text evidence="5">Belongs to the Aux/IAA family.</text>
</comment>
<dbReference type="EMBL" id="AP005394">
    <property type="protein sequence ID" value="BAD25870.1"/>
    <property type="molecule type" value="Genomic_DNA"/>
</dbReference>
<dbReference type="EMBL" id="AP005756">
    <property type="protein sequence ID" value="BAD26156.1"/>
    <property type="molecule type" value="Genomic_DNA"/>
</dbReference>
<dbReference type="EMBL" id="AP008208">
    <property type="protein sequence ID" value="BAF08271.1"/>
    <property type="molecule type" value="Genomic_DNA"/>
</dbReference>
<dbReference type="EMBL" id="AP014958">
    <property type="protein sequence ID" value="BAS77759.1"/>
    <property type="molecule type" value="Genomic_DNA"/>
</dbReference>
<dbReference type="EMBL" id="CM000139">
    <property type="protein sequence ID" value="EEE56602.1"/>
    <property type="molecule type" value="Genomic_DNA"/>
</dbReference>
<dbReference type="EMBL" id="AK121870">
    <property type="protein sequence ID" value="BAH00699.1"/>
    <property type="molecule type" value="mRNA"/>
</dbReference>
<dbReference type="RefSeq" id="XP_015623972.1">
    <property type="nucleotide sequence ID" value="XM_015768486.1"/>
</dbReference>
<dbReference type="SMR" id="Q6H543"/>
<dbReference type="FunCoup" id="Q6H543">
    <property type="interactions" value="57"/>
</dbReference>
<dbReference type="STRING" id="39947.Q6H543"/>
<dbReference type="PaxDb" id="39947-Q6H543"/>
<dbReference type="EnsemblPlants" id="Os02t0228900-01">
    <property type="protein sequence ID" value="Os02t0228900-01"/>
    <property type="gene ID" value="Os02g0228900"/>
</dbReference>
<dbReference type="Gramene" id="Os02t0228900-01">
    <property type="protein sequence ID" value="Os02t0228900-01"/>
    <property type="gene ID" value="Os02g0228900"/>
</dbReference>
<dbReference type="KEGG" id="dosa:Os02g0228900"/>
<dbReference type="eggNOG" id="ENOG502QPYY">
    <property type="taxonomic scope" value="Eukaryota"/>
</dbReference>
<dbReference type="HOGENOM" id="CLU_049393_2_1_1"/>
<dbReference type="InParanoid" id="Q6H543"/>
<dbReference type="OMA" id="RHGDEQE"/>
<dbReference type="OrthoDB" id="615826at2759"/>
<dbReference type="PlantReactome" id="R-OSA-5608118">
    <property type="pathway name" value="Auxin signalling"/>
</dbReference>
<dbReference type="Proteomes" id="UP000000763">
    <property type="component" value="Chromosome 2"/>
</dbReference>
<dbReference type="Proteomes" id="UP000007752">
    <property type="component" value="Chromosome 2"/>
</dbReference>
<dbReference type="Proteomes" id="UP000059680">
    <property type="component" value="Chromosome 2"/>
</dbReference>
<dbReference type="GO" id="GO:0005634">
    <property type="term" value="C:nucleus"/>
    <property type="evidence" value="ECO:0007669"/>
    <property type="project" value="UniProtKB-SubCell"/>
</dbReference>
<dbReference type="GO" id="GO:0009734">
    <property type="term" value="P:auxin-activated signaling pathway"/>
    <property type="evidence" value="ECO:0007669"/>
    <property type="project" value="UniProtKB-KW"/>
</dbReference>
<dbReference type="GO" id="GO:0006355">
    <property type="term" value="P:regulation of DNA-templated transcription"/>
    <property type="evidence" value="ECO:0007669"/>
    <property type="project" value="InterPro"/>
</dbReference>
<dbReference type="GO" id="GO:0009733">
    <property type="term" value="P:response to auxin"/>
    <property type="evidence" value="ECO:0000305"/>
    <property type="project" value="Gramene"/>
</dbReference>
<dbReference type="FunFam" id="3.10.20.90:FF:000225">
    <property type="entry name" value="Auxin-responsive protein"/>
    <property type="match status" value="1"/>
</dbReference>
<dbReference type="Gene3D" id="3.10.20.90">
    <property type="entry name" value="Phosphatidylinositol 3-kinase Catalytic Subunit, Chain A, domain 1"/>
    <property type="match status" value="1"/>
</dbReference>
<dbReference type="InterPro" id="IPR033389">
    <property type="entry name" value="AUX/IAA_dom"/>
</dbReference>
<dbReference type="InterPro" id="IPR003311">
    <property type="entry name" value="AUX_IAA"/>
</dbReference>
<dbReference type="InterPro" id="IPR053793">
    <property type="entry name" value="PB1-like"/>
</dbReference>
<dbReference type="PANTHER" id="PTHR31734">
    <property type="entry name" value="AUXIN-RESPONSIVE PROTEIN IAA17"/>
    <property type="match status" value="1"/>
</dbReference>
<dbReference type="PANTHER" id="PTHR31734:SF266">
    <property type="entry name" value="AUXIN-RESPONSIVE PROTEIN IAA7"/>
    <property type="match status" value="1"/>
</dbReference>
<dbReference type="Pfam" id="PF02309">
    <property type="entry name" value="AUX_IAA"/>
    <property type="match status" value="1"/>
</dbReference>
<dbReference type="SUPFAM" id="SSF54277">
    <property type="entry name" value="CAD &amp; PB1 domains"/>
    <property type="match status" value="1"/>
</dbReference>
<dbReference type="PROSITE" id="PS51745">
    <property type="entry name" value="PB1"/>
    <property type="match status" value="1"/>
</dbReference>
<name>IAA7_ORYSJ</name>
<sequence>MGEASESMKKISRGRLGGSWMGEPSDHHRHGDEQEEEEKTLELSLGLPGGGWRAACRDKGTTTKHSIAAAAAADDDDGDKSSMLSLGYSTLVSHSQGKANKNKGSPEEEEAHPPPATGNNALASNNNGCFQTRSPSTPVVGWPPVRTFRRNLATSSKASLELQNGKKAAKAEEIKRAPFIKINMDGVPIGRKIDLNAFDSYEKLSLAVDKLFRGLLAAQRDPLTAGAKDCQQEDVAISGLLDGTGEYTLVYEDYEGDKVLVGDVPWGMFVSSVKRLRVLKTSDLSSSLITSGRKRTAAEC</sequence>
<gene>
    <name type="primary">IAA7</name>
    <name type="ordered locus">Os02g0228900</name>
    <name type="ordered locus">LOC_Os02g13520</name>
    <name evidence="6" type="ORF">OsJ_05967</name>
    <name type="ORF">OSJNBb0035N08.7</name>
    <name type="ORF">P0620H05.33</name>
</gene>
<reference key="1">
    <citation type="journal article" date="2005" name="Nature">
        <title>The map-based sequence of the rice genome.</title>
        <authorList>
            <consortium name="International rice genome sequencing project (IRGSP)"/>
        </authorList>
    </citation>
    <scope>NUCLEOTIDE SEQUENCE [LARGE SCALE GENOMIC DNA]</scope>
    <source>
        <strain>cv. Nipponbare</strain>
    </source>
</reference>
<reference key="2">
    <citation type="journal article" date="2008" name="Nucleic Acids Res.">
        <title>The rice annotation project database (RAP-DB): 2008 update.</title>
        <authorList>
            <consortium name="The rice annotation project (RAP)"/>
        </authorList>
    </citation>
    <scope>GENOME REANNOTATION</scope>
    <source>
        <strain>cv. Nipponbare</strain>
    </source>
</reference>
<reference key="3">
    <citation type="journal article" date="2013" name="Rice">
        <title>Improvement of the Oryza sativa Nipponbare reference genome using next generation sequence and optical map data.</title>
        <authorList>
            <person name="Kawahara Y."/>
            <person name="de la Bastide M."/>
            <person name="Hamilton J.P."/>
            <person name="Kanamori H."/>
            <person name="McCombie W.R."/>
            <person name="Ouyang S."/>
            <person name="Schwartz D.C."/>
            <person name="Tanaka T."/>
            <person name="Wu J."/>
            <person name="Zhou S."/>
            <person name="Childs K.L."/>
            <person name="Davidson R.M."/>
            <person name="Lin H."/>
            <person name="Quesada-Ocampo L."/>
            <person name="Vaillancourt B."/>
            <person name="Sakai H."/>
            <person name="Lee S.S."/>
            <person name="Kim J."/>
            <person name="Numa H."/>
            <person name="Itoh T."/>
            <person name="Buell C.R."/>
            <person name="Matsumoto T."/>
        </authorList>
    </citation>
    <scope>GENOME REANNOTATION</scope>
    <source>
        <strain>cv. Nipponbare</strain>
    </source>
</reference>
<reference key="4">
    <citation type="journal article" date="2005" name="PLoS Biol.">
        <title>The genomes of Oryza sativa: a history of duplications.</title>
        <authorList>
            <person name="Yu J."/>
            <person name="Wang J."/>
            <person name="Lin W."/>
            <person name="Li S."/>
            <person name="Li H."/>
            <person name="Zhou J."/>
            <person name="Ni P."/>
            <person name="Dong W."/>
            <person name="Hu S."/>
            <person name="Zeng C."/>
            <person name="Zhang J."/>
            <person name="Zhang Y."/>
            <person name="Li R."/>
            <person name="Xu Z."/>
            <person name="Li S."/>
            <person name="Li X."/>
            <person name="Zheng H."/>
            <person name="Cong L."/>
            <person name="Lin L."/>
            <person name="Yin J."/>
            <person name="Geng J."/>
            <person name="Li G."/>
            <person name="Shi J."/>
            <person name="Liu J."/>
            <person name="Lv H."/>
            <person name="Li J."/>
            <person name="Wang J."/>
            <person name="Deng Y."/>
            <person name="Ran L."/>
            <person name="Shi X."/>
            <person name="Wang X."/>
            <person name="Wu Q."/>
            <person name="Li C."/>
            <person name="Ren X."/>
            <person name="Wang J."/>
            <person name="Wang X."/>
            <person name="Li D."/>
            <person name="Liu D."/>
            <person name="Zhang X."/>
            <person name="Ji Z."/>
            <person name="Zhao W."/>
            <person name="Sun Y."/>
            <person name="Zhang Z."/>
            <person name="Bao J."/>
            <person name="Han Y."/>
            <person name="Dong L."/>
            <person name="Ji J."/>
            <person name="Chen P."/>
            <person name="Wu S."/>
            <person name="Liu J."/>
            <person name="Xiao Y."/>
            <person name="Bu D."/>
            <person name="Tan J."/>
            <person name="Yang L."/>
            <person name="Ye C."/>
            <person name="Zhang J."/>
            <person name="Xu J."/>
            <person name="Zhou Y."/>
            <person name="Yu Y."/>
            <person name="Zhang B."/>
            <person name="Zhuang S."/>
            <person name="Wei H."/>
            <person name="Liu B."/>
            <person name="Lei M."/>
            <person name="Yu H."/>
            <person name="Li Y."/>
            <person name="Xu H."/>
            <person name="Wei S."/>
            <person name="He X."/>
            <person name="Fang L."/>
            <person name="Zhang Z."/>
            <person name="Zhang Y."/>
            <person name="Huang X."/>
            <person name="Su Z."/>
            <person name="Tong W."/>
            <person name="Li J."/>
            <person name="Tong Z."/>
            <person name="Li S."/>
            <person name="Ye J."/>
            <person name="Wang L."/>
            <person name="Fang L."/>
            <person name="Lei T."/>
            <person name="Chen C.-S."/>
            <person name="Chen H.-C."/>
            <person name="Xu Z."/>
            <person name="Li H."/>
            <person name="Huang H."/>
            <person name="Zhang F."/>
            <person name="Xu H."/>
            <person name="Li N."/>
            <person name="Zhao C."/>
            <person name="Li S."/>
            <person name="Dong L."/>
            <person name="Huang Y."/>
            <person name="Li L."/>
            <person name="Xi Y."/>
            <person name="Qi Q."/>
            <person name="Li W."/>
            <person name="Zhang B."/>
            <person name="Hu W."/>
            <person name="Zhang Y."/>
            <person name="Tian X."/>
            <person name="Jiao Y."/>
            <person name="Liang X."/>
            <person name="Jin J."/>
            <person name="Gao L."/>
            <person name="Zheng W."/>
            <person name="Hao B."/>
            <person name="Liu S.-M."/>
            <person name="Wang W."/>
            <person name="Yuan L."/>
            <person name="Cao M."/>
            <person name="McDermott J."/>
            <person name="Samudrala R."/>
            <person name="Wang J."/>
            <person name="Wong G.K.-S."/>
            <person name="Yang H."/>
        </authorList>
    </citation>
    <scope>NUCLEOTIDE SEQUENCE [LARGE SCALE GENOMIC DNA]</scope>
    <source>
        <strain>cv. Nipponbare</strain>
    </source>
</reference>
<reference key="5">
    <citation type="journal article" date="2003" name="Science">
        <title>Collection, mapping, and annotation of over 28,000 cDNA clones from japonica rice.</title>
        <authorList>
            <consortium name="The rice full-length cDNA consortium"/>
        </authorList>
    </citation>
    <scope>NUCLEOTIDE SEQUENCE [LARGE SCALE MRNA]</scope>
    <source>
        <strain>cv. Nipponbare</strain>
    </source>
</reference>
<reference key="6">
    <citation type="journal article" date="2006" name="Funct. Integr. Genomics">
        <title>Structure and expression analysis of early auxin-responsive Aux/IAA gene family in rice (Oryza sativa).</title>
        <authorList>
            <person name="Jain M."/>
            <person name="Kaur N."/>
            <person name="Garg R."/>
            <person name="Thakur J.K."/>
            <person name="Tyagi A.K."/>
            <person name="Khurana J.P."/>
        </authorList>
    </citation>
    <scope>TISSUE SPECIFICITY</scope>
    <scope>INDUCTION</scope>
    <scope>NOMENCLATURE</scope>
</reference>